<comment type="function">
    <text evidence="1">The RuvA-RuvB-RuvC complex processes Holliday junction (HJ) DNA during genetic recombination and DNA repair. Endonuclease that resolves HJ intermediates. Cleaves cruciform DNA by making single-stranded nicks across the HJ at symmetrical positions within the homologous arms, yielding a 5'-phosphate and a 3'-hydroxyl group; requires a central core of homology in the junction. The consensus cleavage sequence is 5'-(A/T)TT(C/G)-3'. Cleavage occurs on the 3'-side of the TT dinucleotide at the point of strand exchange. HJ branch migration catalyzed by RuvA-RuvB allows RuvC to scan DNA until it finds its consensus sequence, where it cleaves and resolves the cruciform DNA.</text>
</comment>
<comment type="catalytic activity">
    <reaction evidence="1">
        <text>Endonucleolytic cleavage at a junction such as a reciprocal single-stranded crossover between two homologous DNA duplexes (Holliday junction).</text>
        <dbReference type="EC" id="3.1.21.10"/>
    </reaction>
</comment>
<comment type="cofactor">
    <cofactor evidence="1">
        <name>Mg(2+)</name>
        <dbReference type="ChEBI" id="CHEBI:18420"/>
    </cofactor>
    <text evidence="1">Binds 2 Mg(2+) ion per subunit.</text>
</comment>
<comment type="subunit">
    <text evidence="1">Homodimer which binds Holliday junction (HJ) DNA. The HJ becomes 2-fold symmetrical on binding to RuvC with unstacked arms; it has a different conformation from HJ DNA in complex with RuvA. In the full resolvosome a probable DNA-RuvA(4)-RuvB(12)-RuvC(2) complex forms which resolves the HJ.</text>
</comment>
<comment type="subcellular location">
    <subcellularLocation>
        <location evidence="1">Cytoplasm</location>
    </subcellularLocation>
</comment>
<comment type="similarity">
    <text evidence="1">Belongs to the RuvC family.</text>
</comment>
<keyword id="KW-0963">Cytoplasm</keyword>
<keyword id="KW-0227">DNA damage</keyword>
<keyword id="KW-0233">DNA recombination</keyword>
<keyword id="KW-0234">DNA repair</keyword>
<keyword id="KW-0238">DNA-binding</keyword>
<keyword id="KW-0255">Endonuclease</keyword>
<keyword id="KW-0378">Hydrolase</keyword>
<keyword id="KW-0460">Magnesium</keyword>
<keyword id="KW-0479">Metal-binding</keyword>
<keyword id="KW-0540">Nuclease</keyword>
<accession>Q5N440</accession>
<gene>
    <name evidence="1" type="primary">ruvC</name>
    <name type="ordered locus">syc0740_d</name>
</gene>
<reference key="1">
    <citation type="journal article" date="2007" name="Photosyn. Res.">
        <title>Complete nucleotide sequence of the freshwater unicellular cyanobacterium Synechococcus elongatus PCC 6301 chromosome: gene content and organization.</title>
        <authorList>
            <person name="Sugita C."/>
            <person name="Ogata K."/>
            <person name="Shikata M."/>
            <person name="Jikuya H."/>
            <person name="Takano J."/>
            <person name="Furumichi M."/>
            <person name="Kanehisa M."/>
            <person name="Omata T."/>
            <person name="Sugiura M."/>
            <person name="Sugita M."/>
        </authorList>
    </citation>
    <scope>NUCLEOTIDE SEQUENCE [LARGE SCALE GENOMIC DNA]</scope>
    <source>
        <strain>ATCC 27144 / PCC 6301 / SAUG 1402/1</strain>
    </source>
</reference>
<evidence type="ECO:0000255" key="1">
    <source>
        <dbReference type="HAMAP-Rule" id="MF_00034"/>
    </source>
</evidence>
<sequence>MGQRILGLDPGLAIVGFGALLCPDSRQGSLELLDFGVISTPAGAEIGDRLETIYQDLHQLIDLVQPDAVAVEKLFFYRMGNTIAVAQARGVLMLVLRQRRLPYCEFTPAQVKQALTGYGNAPKLAVQQAVQRELQLDAIPRPDDAADAVALALTAWFQQLA</sequence>
<organism>
    <name type="scientific">Synechococcus sp. (strain ATCC 27144 / PCC 6301 / SAUG 1402/1)</name>
    <name type="common">Anacystis nidulans</name>
    <dbReference type="NCBI Taxonomy" id="269084"/>
    <lineage>
        <taxon>Bacteria</taxon>
        <taxon>Bacillati</taxon>
        <taxon>Cyanobacteriota</taxon>
        <taxon>Cyanophyceae</taxon>
        <taxon>Synechococcales</taxon>
        <taxon>Synechococcaceae</taxon>
        <taxon>Synechococcus</taxon>
    </lineage>
</organism>
<feature type="chain" id="PRO_0000225181" description="Crossover junction endodeoxyribonuclease RuvC">
    <location>
        <begin position="1"/>
        <end position="161"/>
    </location>
</feature>
<feature type="active site" evidence="1">
    <location>
        <position position="9"/>
    </location>
</feature>
<feature type="active site" evidence="1">
    <location>
        <position position="72"/>
    </location>
</feature>
<feature type="active site" evidence="1">
    <location>
        <position position="144"/>
    </location>
</feature>
<feature type="binding site" evidence="1">
    <location>
        <position position="9"/>
    </location>
    <ligand>
        <name>Mg(2+)</name>
        <dbReference type="ChEBI" id="CHEBI:18420"/>
        <label>1</label>
    </ligand>
</feature>
<feature type="binding site" evidence="1">
    <location>
        <position position="72"/>
    </location>
    <ligand>
        <name>Mg(2+)</name>
        <dbReference type="ChEBI" id="CHEBI:18420"/>
        <label>2</label>
    </ligand>
</feature>
<feature type="binding site" evidence="1">
    <location>
        <position position="144"/>
    </location>
    <ligand>
        <name>Mg(2+)</name>
        <dbReference type="ChEBI" id="CHEBI:18420"/>
        <label>1</label>
    </ligand>
</feature>
<protein>
    <recommendedName>
        <fullName evidence="1">Crossover junction endodeoxyribonuclease RuvC</fullName>
        <ecNumber evidence="1">3.1.21.10</ecNumber>
    </recommendedName>
    <alternativeName>
        <fullName evidence="1">Holliday junction nuclease RuvC</fullName>
    </alternativeName>
    <alternativeName>
        <fullName evidence="1">Holliday junction resolvase RuvC</fullName>
    </alternativeName>
</protein>
<name>RUVC_SYNP6</name>
<proteinExistence type="inferred from homology"/>
<dbReference type="EC" id="3.1.21.10" evidence="1"/>
<dbReference type="EMBL" id="AP008231">
    <property type="protein sequence ID" value="BAD78930.1"/>
    <property type="molecule type" value="Genomic_DNA"/>
</dbReference>
<dbReference type="RefSeq" id="WP_011243052.1">
    <property type="nucleotide sequence ID" value="NZ_CP085785.1"/>
</dbReference>
<dbReference type="SMR" id="Q5N440"/>
<dbReference type="GeneID" id="72429644"/>
<dbReference type="KEGG" id="syc:syc0740_d"/>
<dbReference type="eggNOG" id="COG0817">
    <property type="taxonomic scope" value="Bacteria"/>
</dbReference>
<dbReference type="Proteomes" id="UP000001175">
    <property type="component" value="Chromosome"/>
</dbReference>
<dbReference type="GO" id="GO:0005737">
    <property type="term" value="C:cytoplasm"/>
    <property type="evidence" value="ECO:0007669"/>
    <property type="project" value="UniProtKB-SubCell"/>
</dbReference>
<dbReference type="GO" id="GO:0048476">
    <property type="term" value="C:Holliday junction resolvase complex"/>
    <property type="evidence" value="ECO:0007669"/>
    <property type="project" value="UniProtKB-UniRule"/>
</dbReference>
<dbReference type="GO" id="GO:0008821">
    <property type="term" value="F:crossover junction DNA endonuclease activity"/>
    <property type="evidence" value="ECO:0007669"/>
    <property type="project" value="UniProtKB-UniRule"/>
</dbReference>
<dbReference type="GO" id="GO:0003677">
    <property type="term" value="F:DNA binding"/>
    <property type="evidence" value="ECO:0007669"/>
    <property type="project" value="UniProtKB-KW"/>
</dbReference>
<dbReference type="GO" id="GO:0000287">
    <property type="term" value="F:magnesium ion binding"/>
    <property type="evidence" value="ECO:0007669"/>
    <property type="project" value="UniProtKB-UniRule"/>
</dbReference>
<dbReference type="GO" id="GO:0006310">
    <property type="term" value="P:DNA recombination"/>
    <property type="evidence" value="ECO:0007669"/>
    <property type="project" value="UniProtKB-UniRule"/>
</dbReference>
<dbReference type="GO" id="GO:0006281">
    <property type="term" value="P:DNA repair"/>
    <property type="evidence" value="ECO:0007669"/>
    <property type="project" value="UniProtKB-UniRule"/>
</dbReference>
<dbReference type="CDD" id="cd16962">
    <property type="entry name" value="RuvC"/>
    <property type="match status" value="1"/>
</dbReference>
<dbReference type="FunFam" id="3.30.420.10:FF:000002">
    <property type="entry name" value="Crossover junction endodeoxyribonuclease RuvC"/>
    <property type="match status" value="1"/>
</dbReference>
<dbReference type="Gene3D" id="3.30.420.10">
    <property type="entry name" value="Ribonuclease H-like superfamily/Ribonuclease H"/>
    <property type="match status" value="1"/>
</dbReference>
<dbReference type="HAMAP" id="MF_00034">
    <property type="entry name" value="RuvC"/>
    <property type="match status" value="1"/>
</dbReference>
<dbReference type="InterPro" id="IPR012337">
    <property type="entry name" value="RNaseH-like_sf"/>
</dbReference>
<dbReference type="InterPro" id="IPR036397">
    <property type="entry name" value="RNaseH_sf"/>
</dbReference>
<dbReference type="InterPro" id="IPR020563">
    <property type="entry name" value="X-over_junc_endoDNase_Mg_BS"/>
</dbReference>
<dbReference type="InterPro" id="IPR002176">
    <property type="entry name" value="X-over_junc_endoDNase_RuvC"/>
</dbReference>
<dbReference type="NCBIfam" id="NF000711">
    <property type="entry name" value="PRK00039.2-1"/>
    <property type="match status" value="1"/>
</dbReference>
<dbReference type="PANTHER" id="PTHR30194">
    <property type="entry name" value="CROSSOVER JUNCTION ENDODEOXYRIBONUCLEASE RUVC"/>
    <property type="match status" value="1"/>
</dbReference>
<dbReference type="PANTHER" id="PTHR30194:SF3">
    <property type="entry name" value="CROSSOVER JUNCTION ENDODEOXYRIBONUCLEASE RUVC"/>
    <property type="match status" value="1"/>
</dbReference>
<dbReference type="Pfam" id="PF02075">
    <property type="entry name" value="RuvC"/>
    <property type="match status" value="1"/>
</dbReference>
<dbReference type="PRINTS" id="PR00696">
    <property type="entry name" value="RSOLVASERUVC"/>
</dbReference>
<dbReference type="SUPFAM" id="SSF53098">
    <property type="entry name" value="Ribonuclease H-like"/>
    <property type="match status" value="1"/>
</dbReference>
<dbReference type="PROSITE" id="PS01321">
    <property type="entry name" value="RUVC"/>
    <property type="match status" value="1"/>
</dbReference>